<evidence type="ECO:0000255" key="1">
    <source>
        <dbReference type="HAMAP-Rule" id="MF_00557"/>
    </source>
</evidence>
<comment type="function">
    <text evidence="1">Catalyzes the depolymerization of alginate by cleaving the beta-1,4 glycosidic bond between two adjacent sugar residues via a beta-elimination mechanism. May serve to degrade mislocalized alginate that is trapped in the periplasmic space.</text>
</comment>
<comment type="catalytic activity">
    <reaction evidence="1">
        <text>Eliminative cleavage of alginate to give oligosaccharides with 4-deoxy-alpha-L-erythro-hex-4-enuronosyl groups at their non-reducing ends and beta-D-mannuronate at their reducing end.</text>
        <dbReference type="EC" id="4.2.2.3"/>
    </reaction>
</comment>
<comment type="subcellular location">
    <subcellularLocation>
        <location evidence="1">Periplasm</location>
    </subcellularLocation>
</comment>
<comment type="similarity">
    <text evidence="1">Belongs to the polysaccharide lyase 5 family.</text>
</comment>
<accession>Q9ZNB7</accession>
<feature type="signal peptide" evidence="1">
    <location>
        <begin position="1"/>
        <end position="26"/>
    </location>
</feature>
<feature type="chain" id="PRO_0000024917" description="Alginate lyase">
    <location>
        <begin position="27"/>
        <end position="374"/>
    </location>
</feature>
<feature type="binding site" evidence="1">
    <location>
        <begin position="67"/>
        <end position="68"/>
    </location>
    <ligand>
        <name>substrate</name>
    </ligand>
</feature>
<feature type="binding site" evidence="1">
    <location>
        <begin position="140"/>
        <end position="141"/>
    </location>
    <ligand>
        <name>substrate</name>
    </ligand>
</feature>
<feature type="binding site" evidence="1">
    <location>
        <position position="258"/>
    </location>
    <ligand>
        <name>substrate</name>
    </ligand>
</feature>
<keyword id="KW-0456">Lyase</keyword>
<keyword id="KW-0574">Periplasm</keyword>
<keyword id="KW-0732">Signal</keyword>
<reference key="1">
    <citation type="submission" date="1998-10" db="EMBL/GenBank/DDBJ databases">
        <title>Alginate lyase gene from Deleya marina.</title>
        <authorList>
            <person name="Kraiwattanapong J."/>
            <person name="Ooi T."/>
            <person name="Kinoshita S."/>
        </authorList>
    </citation>
    <scope>NUCLEOTIDE SEQUENCE [GENOMIC DNA]</scope>
    <source>
        <strain>N-1</strain>
    </source>
</reference>
<gene>
    <name evidence="1" type="primary">algL</name>
    <name type="synonym">alg</name>
</gene>
<dbReference type="EC" id="4.2.2.3" evidence="1"/>
<dbReference type="EMBL" id="AB018795">
    <property type="protein sequence ID" value="BAA33966.1"/>
    <property type="molecule type" value="Genomic_DNA"/>
</dbReference>
<dbReference type="SMR" id="Q9ZNB7"/>
<dbReference type="CAZy" id="PL5">
    <property type="family name" value="Polysaccharide Lyase Family 5"/>
</dbReference>
<dbReference type="BRENDA" id="4.2.2.3">
    <property type="organism ID" value="5136"/>
</dbReference>
<dbReference type="GO" id="GO:0042597">
    <property type="term" value="C:periplasmic space"/>
    <property type="evidence" value="ECO:0007669"/>
    <property type="project" value="UniProtKB-SubCell"/>
</dbReference>
<dbReference type="GO" id="GO:0045135">
    <property type="term" value="F:poly(beta-D-mannuronate) lyase activity"/>
    <property type="evidence" value="ECO:0007669"/>
    <property type="project" value="UniProtKB-UniRule"/>
</dbReference>
<dbReference type="GO" id="GO:0042122">
    <property type="term" value="P:alginic acid catabolic process"/>
    <property type="evidence" value="ECO:0007669"/>
    <property type="project" value="UniProtKB-UniRule"/>
</dbReference>
<dbReference type="CDD" id="cd00244">
    <property type="entry name" value="AlgLyase"/>
    <property type="match status" value="1"/>
</dbReference>
<dbReference type="Gene3D" id="1.50.10.100">
    <property type="entry name" value="Chondroitin AC/alginate lyase"/>
    <property type="match status" value="1"/>
</dbReference>
<dbReference type="HAMAP" id="MF_00557">
    <property type="entry name" value="Alginate_lyase"/>
    <property type="match status" value="1"/>
</dbReference>
<dbReference type="InterPro" id="IPR022859">
    <property type="entry name" value="Alginate_lyase"/>
</dbReference>
<dbReference type="InterPro" id="IPR008397">
    <property type="entry name" value="Alginate_lyase_dom"/>
</dbReference>
<dbReference type="InterPro" id="IPR008929">
    <property type="entry name" value="Chondroitin_lyas"/>
</dbReference>
<dbReference type="NCBIfam" id="NF001467">
    <property type="entry name" value="PRK00325.1-2"/>
    <property type="match status" value="1"/>
</dbReference>
<dbReference type="NCBIfam" id="NF001468">
    <property type="entry name" value="PRK00325.1-3"/>
    <property type="match status" value="1"/>
</dbReference>
<dbReference type="Pfam" id="PF05426">
    <property type="entry name" value="Alginate_lyase"/>
    <property type="match status" value="1"/>
</dbReference>
<dbReference type="SUPFAM" id="SSF48230">
    <property type="entry name" value="Chondroitin AC/alginate lyase"/>
    <property type="match status" value="1"/>
</dbReference>
<protein>
    <recommendedName>
        <fullName evidence="1">Alginate lyase</fullName>
        <ecNumber evidence="1">4.2.2.3</ecNumber>
    </recommendedName>
    <alternativeName>
        <fullName evidence="1">Poly(beta-D-mannuronate) lyase</fullName>
    </alternativeName>
</protein>
<organism>
    <name type="scientific">Cobetia marina</name>
    <name type="common">Deleya marina</name>
    <dbReference type="NCBI Taxonomy" id="28258"/>
    <lineage>
        <taxon>Bacteria</taxon>
        <taxon>Pseudomonadati</taxon>
        <taxon>Pseudomonadota</taxon>
        <taxon>Gammaproteobacteria</taxon>
        <taxon>Oceanospirillales</taxon>
        <taxon>Halomonadaceae</taxon>
        <taxon>Cobetia</taxon>
    </lineage>
</organism>
<name>ALGL_COBMA</name>
<sequence>MRNPKLKNLLAPTLLSLAMFAGATQAAAPLRPPQGYFAPVDKFKTGDKSDGCDAMPAPYTGPLQFRSKYEGSDKARATLNVQSEKAFRDTTKDITTLERGTAKRVMQFMRDGRPEQLECTLNWLTAWAKADALMSKDFNHTGKSMRKWALGSMASSYIRLKFSDSHPLAQHQQEAQLIEAWFSKMADQVVSDWDNLPLEKTNNHSYWAAWSVMATAVATNRRDLFDWAVKEYKVGVNQVDADGFLPNELKRQQRALAYHNYALPPLAMIASFAQINGVDLRQENNGALKRLGDRVLAGVKDPDEFEEKNGKKQDMTDLKEDMKFAWLEPFCTLYTCAPDVIEKKRDMQPFKTFRLGGDLTKVYDPSHEKGNKGS</sequence>
<proteinExistence type="inferred from homology"/>